<proteinExistence type="inferred from homology"/>
<dbReference type="EC" id="6.1.1.14" evidence="1"/>
<dbReference type="EMBL" id="BX950229">
    <property type="protein sequence ID" value="CAF29768.1"/>
    <property type="molecule type" value="Genomic_DNA"/>
</dbReference>
<dbReference type="RefSeq" id="WP_011170156.1">
    <property type="nucleotide sequence ID" value="NC_005791.1"/>
</dbReference>
<dbReference type="SMR" id="Q6M0Q7"/>
<dbReference type="STRING" id="267377.MMP0212"/>
<dbReference type="EnsemblBacteria" id="CAF29768">
    <property type="protein sequence ID" value="CAF29768"/>
    <property type="gene ID" value="MMP0212"/>
</dbReference>
<dbReference type="GeneID" id="2761470"/>
<dbReference type="KEGG" id="mmp:MMP0212"/>
<dbReference type="PATRIC" id="fig|267377.15.peg.215"/>
<dbReference type="eggNOG" id="arCOG00405">
    <property type="taxonomic scope" value="Archaea"/>
</dbReference>
<dbReference type="HOGENOM" id="CLU_015515_1_2_2"/>
<dbReference type="OrthoDB" id="6113at2157"/>
<dbReference type="Proteomes" id="UP000000590">
    <property type="component" value="Chromosome"/>
</dbReference>
<dbReference type="GO" id="GO:0005737">
    <property type="term" value="C:cytoplasm"/>
    <property type="evidence" value="ECO:0007669"/>
    <property type="project" value="UniProtKB-SubCell"/>
</dbReference>
<dbReference type="GO" id="GO:0005524">
    <property type="term" value="F:ATP binding"/>
    <property type="evidence" value="ECO:0007669"/>
    <property type="project" value="UniProtKB-UniRule"/>
</dbReference>
<dbReference type="GO" id="GO:0004820">
    <property type="term" value="F:glycine-tRNA ligase activity"/>
    <property type="evidence" value="ECO:0000250"/>
    <property type="project" value="UniProtKB"/>
</dbReference>
<dbReference type="GO" id="GO:0046983">
    <property type="term" value="F:protein dimerization activity"/>
    <property type="evidence" value="ECO:0000250"/>
    <property type="project" value="UniProtKB"/>
</dbReference>
<dbReference type="GO" id="GO:0006426">
    <property type="term" value="P:glycyl-tRNA aminoacylation"/>
    <property type="evidence" value="ECO:0007669"/>
    <property type="project" value="UniProtKB-UniRule"/>
</dbReference>
<dbReference type="CDD" id="cd00774">
    <property type="entry name" value="GlyRS-like_core"/>
    <property type="match status" value="1"/>
</dbReference>
<dbReference type="CDD" id="cd00858">
    <property type="entry name" value="GlyRS_anticodon"/>
    <property type="match status" value="1"/>
</dbReference>
<dbReference type="FunFam" id="3.30.40.230:FF:000005">
    <property type="entry name" value="Glycine--tRNA ligase"/>
    <property type="match status" value="1"/>
</dbReference>
<dbReference type="FunFam" id="3.40.50.800:FF:000002">
    <property type="entry name" value="Glycine--tRNA ligase"/>
    <property type="match status" value="1"/>
</dbReference>
<dbReference type="FunFam" id="3.30.720.200:FF:000001">
    <property type="entry name" value="Glycine--tRNA ligase 2"/>
    <property type="match status" value="1"/>
</dbReference>
<dbReference type="Gene3D" id="3.30.40.230">
    <property type="match status" value="1"/>
</dbReference>
<dbReference type="Gene3D" id="3.30.720.200">
    <property type="match status" value="1"/>
</dbReference>
<dbReference type="Gene3D" id="3.40.50.800">
    <property type="entry name" value="Anticodon-binding domain"/>
    <property type="match status" value="1"/>
</dbReference>
<dbReference type="Gene3D" id="3.30.930.10">
    <property type="entry name" value="Bira Bifunctional Protein, Domain 2"/>
    <property type="match status" value="1"/>
</dbReference>
<dbReference type="HAMAP" id="MF_00253_A">
    <property type="entry name" value="Gly_tRNA_synth_A"/>
    <property type="match status" value="1"/>
</dbReference>
<dbReference type="InterPro" id="IPR002314">
    <property type="entry name" value="aa-tRNA-synt_IIb"/>
</dbReference>
<dbReference type="InterPro" id="IPR006195">
    <property type="entry name" value="aa-tRNA-synth_II"/>
</dbReference>
<dbReference type="InterPro" id="IPR045864">
    <property type="entry name" value="aa-tRNA-synth_II/BPL/LPL"/>
</dbReference>
<dbReference type="InterPro" id="IPR004154">
    <property type="entry name" value="Anticodon-bd"/>
</dbReference>
<dbReference type="InterPro" id="IPR036621">
    <property type="entry name" value="Anticodon-bd_dom_sf"/>
</dbReference>
<dbReference type="InterPro" id="IPR027031">
    <property type="entry name" value="Gly-tRNA_synthase/POLG2"/>
</dbReference>
<dbReference type="InterPro" id="IPR022960">
    <property type="entry name" value="Gly_tRNA_ligase_arc"/>
</dbReference>
<dbReference type="InterPro" id="IPR033731">
    <property type="entry name" value="GlyRS-like_core"/>
</dbReference>
<dbReference type="InterPro" id="IPR002315">
    <property type="entry name" value="tRNA-synt_gly"/>
</dbReference>
<dbReference type="NCBIfam" id="TIGR00389">
    <property type="entry name" value="glyS_dimeric"/>
    <property type="match status" value="1"/>
</dbReference>
<dbReference type="NCBIfam" id="NF003211">
    <property type="entry name" value="PRK04173.1"/>
    <property type="match status" value="1"/>
</dbReference>
<dbReference type="PANTHER" id="PTHR10745:SF0">
    <property type="entry name" value="GLYCINE--TRNA LIGASE"/>
    <property type="match status" value="1"/>
</dbReference>
<dbReference type="PANTHER" id="PTHR10745">
    <property type="entry name" value="GLYCYL-TRNA SYNTHETASE/DNA POLYMERASE SUBUNIT GAMMA-2"/>
    <property type="match status" value="1"/>
</dbReference>
<dbReference type="Pfam" id="PF03129">
    <property type="entry name" value="HGTP_anticodon"/>
    <property type="match status" value="1"/>
</dbReference>
<dbReference type="Pfam" id="PF00587">
    <property type="entry name" value="tRNA-synt_2b"/>
    <property type="match status" value="1"/>
</dbReference>
<dbReference type="PRINTS" id="PR01043">
    <property type="entry name" value="TRNASYNTHGLY"/>
</dbReference>
<dbReference type="SUPFAM" id="SSF52954">
    <property type="entry name" value="Class II aaRS ABD-related"/>
    <property type="match status" value="1"/>
</dbReference>
<dbReference type="SUPFAM" id="SSF55681">
    <property type="entry name" value="Class II aaRS and biotin synthetases"/>
    <property type="match status" value="1"/>
</dbReference>
<dbReference type="PROSITE" id="PS50862">
    <property type="entry name" value="AA_TRNA_LIGASE_II"/>
    <property type="match status" value="1"/>
</dbReference>
<protein>
    <recommendedName>
        <fullName evidence="1">Glycine--tRNA ligase</fullName>
        <ecNumber evidence="1">6.1.1.14</ecNumber>
    </recommendedName>
    <alternativeName>
        <fullName evidence="1">Glycyl-tRNA synthetase</fullName>
        <shortName evidence="1">GlyRS</shortName>
    </alternativeName>
</protein>
<comment type="function">
    <text evidence="1">Catalyzes the attachment of glycine to tRNA(Gly).</text>
</comment>
<comment type="catalytic activity">
    <reaction evidence="1">
        <text>tRNA(Gly) + glycine + ATP = glycyl-tRNA(Gly) + AMP + diphosphate</text>
        <dbReference type="Rhea" id="RHEA:16013"/>
        <dbReference type="Rhea" id="RHEA-COMP:9664"/>
        <dbReference type="Rhea" id="RHEA-COMP:9683"/>
        <dbReference type="ChEBI" id="CHEBI:30616"/>
        <dbReference type="ChEBI" id="CHEBI:33019"/>
        <dbReference type="ChEBI" id="CHEBI:57305"/>
        <dbReference type="ChEBI" id="CHEBI:78442"/>
        <dbReference type="ChEBI" id="CHEBI:78522"/>
        <dbReference type="ChEBI" id="CHEBI:456215"/>
        <dbReference type="EC" id="6.1.1.14"/>
    </reaction>
</comment>
<comment type="subcellular location">
    <subcellularLocation>
        <location evidence="1">Cytoplasm</location>
    </subcellularLocation>
</comment>
<comment type="similarity">
    <text evidence="1">Belongs to the class-II aminoacyl-tRNA synthetase family.</text>
</comment>
<organism>
    <name type="scientific">Methanococcus maripaludis (strain DSM 14266 / JCM 13030 / NBRC 101832 / S2 / LL)</name>
    <dbReference type="NCBI Taxonomy" id="267377"/>
    <lineage>
        <taxon>Archaea</taxon>
        <taxon>Methanobacteriati</taxon>
        <taxon>Methanobacteriota</taxon>
        <taxon>Methanomada group</taxon>
        <taxon>Methanococci</taxon>
        <taxon>Methanococcales</taxon>
        <taxon>Methanococcaceae</taxon>
        <taxon>Methanococcus</taxon>
    </lineage>
</organism>
<keyword id="KW-0030">Aminoacyl-tRNA synthetase</keyword>
<keyword id="KW-0067">ATP-binding</keyword>
<keyword id="KW-0963">Cytoplasm</keyword>
<keyword id="KW-0436">Ligase</keyword>
<keyword id="KW-0547">Nucleotide-binding</keyword>
<keyword id="KW-0648">Protein biosynthesis</keyword>
<keyword id="KW-1185">Reference proteome</keyword>
<name>SYG_METMP</name>
<accession>Q6M0Q7</accession>
<feature type="chain" id="PRO_0000072992" description="Glycine--tRNA ligase">
    <location>
        <begin position="1"/>
        <end position="574"/>
    </location>
</feature>
<feature type="binding site" evidence="1">
    <location>
        <position position="96"/>
    </location>
    <ligand>
        <name>substrate</name>
    </ligand>
</feature>
<feature type="binding site" evidence="1">
    <location>
        <position position="162"/>
    </location>
    <ligand>
        <name>substrate</name>
    </ligand>
</feature>
<feature type="binding site" evidence="1">
    <location>
        <begin position="194"/>
        <end position="196"/>
    </location>
    <ligand>
        <name>ATP</name>
        <dbReference type="ChEBI" id="CHEBI:30616"/>
    </ligand>
</feature>
<feature type="binding site" evidence="1">
    <location>
        <begin position="204"/>
        <end position="209"/>
    </location>
    <ligand>
        <name>ATP</name>
        <dbReference type="ChEBI" id="CHEBI:30616"/>
    </ligand>
</feature>
<feature type="binding site" evidence="1">
    <location>
        <begin position="209"/>
        <end position="213"/>
    </location>
    <ligand>
        <name>substrate</name>
    </ligand>
</feature>
<feature type="binding site" evidence="1">
    <location>
        <begin position="327"/>
        <end position="328"/>
    </location>
    <ligand>
        <name>ATP</name>
        <dbReference type="ChEBI" id="CHEBI:30616"/>
    </ligand>
</feature>
<feature type="binding site" evidence="1">
    <location>
        <begin position="446"/>
        <end position="450"/>
    </location>
    <ligand>
        <name>substrate</name>
    </ligand>
</feature>
<feature type="binding site" evidence="1">
    <location>
        <begin position="450"/>
        <end position="453"/>
    </location>
    <ligand>
        <name>ATP</name>
        <dbReference type="ChEBI" id="CHEBI:30616"/>
    </ligand>
</feature>
<evidence type="ECO:0000255" key="1">
    <source>
        <dbReference type="HAMAP-Rule" id="MF_00253"/>
    </source>
</evidence>
<gene>
    <name evidence="1" type="primary">glyS</name>
    <name type="ordered locus">MMP0212</name>
</gene>
<sequence length="574" mass="66010">MDKYDKIIDLTKRRGFLWNSFEIYGGIAGFFDYGPLGAILKNNVINTWRKHYIVNEGFYEIDSPTVTPYEVLKASGHVENFTDPLVECKDCLESFRADHIIEENVDVDTEGKTLQELQEMIEKNNIRCPKCGGEFKEVSTFNLMFATSIGPGGKRAAFMRPETAQGIFIQFKRISQFFRNKLPFGAVQIGKAYRNEISPRQGVIRLREFTQAEGEFFIDSRKKENFEKFESVKDMVLPLLSGKNQEDESLSSEEKVVKMSLSDAVKNGIIAHEAIAYYIAVTKKFLMEIGIDETKLRFRQHLPNEMAHYAADCWDAELYTDRYGWIECVGVADRTNYDLLAHMKNSGDDLSVFVELDEEHEIEAYEIELNYKLVGRTFKGDAKVLEESLKELDDKKMEELVEALETEGKYVLKTCKRDFEILKEYLTAKKVKKIVKGEKIIPHVIEPSYGIDRITYCVMEHAFKEDEDRTVMGFSNAVSPIKVGVFPLVNKEGMPEIAMDLKNKLRENGLIAEYDDSGAIGRRYMRMDEVGTPFCITIDGETLKDRSVTIRERDSREQFRIPINEVVPYIKDKL</sequence>
<reference key="1">
    <citation type="journal article" date="2004" name="J. Bacteriol.">
        <title>Complete genome sequence of the genetically tractable hydrogenotrophic methanogen Methanococcus maripaludis.</title>
        <authorList>
            <person name="Hendrickson E.L."/>
            <person name="Kaul R."/>
            <person name="Zhou Y."/>
            <person name="Bovee D."/>
            <person name="Chapman P."/>
            <person name="Chung J."/>
            <person name="Conway de Macario E."/>
            <person name="Dodsworth J.A."/>
            <person name="Gillett W."/>
            <person name="Graham D.E."/>
            <person name="Hackett M."/>
            <person name="Haydock A.K."/>
            <person name="Kang A."/>
            <person name="Land M.L."/>
            <person name="Levy R."/>
            <person name="Lie T.J."/>
            <person name="Major T.A."/>
            <person name="Moore B.C."/>
            <person name="Porat I."/>
            <person name="Palmeiri A."/>
            <person name="Rouse G."/>
            <person name="Saenphimmachak C."/>
            <person name="Soell D."/>
            <person name="Van Dien S."/>
            <person name="Wang T."/>
            <person name="Whitman W.B."/>
            <person name="Xia Q."/>
            <person name="Zhang Y."/>
            <person name="Larimer F.W."/>
            <person name="Olson M.V."/>
            <person name="Leigh J.A."/>
        </authorList>
    </citation>
    <scope>NUCLEOTIDE SEQUENCE [LARGE SCALE GENOMIC DNA]</scope>
    <source>
        <strain>DSM 14266 / JCM 13030 / NBRC 101832 / S2 / LL</strain>
    </source>
</reference>